<evidence type="ECO:0000250" key="1">
    <source>
        <dbReference type="UniProtKB" id="A5HUI5"/>
    </source>
</evidence>
<evidence type="ECO:0000250" key="2">
    <source>
        <dbReference type="UniProtKB" id="D3UW23"/>
    </source>
</evidence>
<evidence type="ECO:0000250" key="3">
    <source>
        <dbReference type="UniProtKB" id="Q07075"/>
    </source>
</evidence>
<evidence type="ECO:0000255" key="4">
    <source>
        <dbReference type="PROSITE-ProRule" id="PRU00498"/>
    </source>
</evidence>
<evidence type="ECO:0000269" key="5">
    <source>
    </source>
</evidence>
<evidence type="ECO:0000303" key="6">
    <source>
    </source>
</evidence>
<evidence type="ECO:0000305" key="7"/>
<evidence type="ECO:0000305" key="8">
    <source>
    </source>
</evidence>
<feature type="chain" id="PRO_0000455653" description="Aminopeptidase A">
    <location>
        <begin position="1" status="less than"/>
        <end position="57" status="greater than"/>
    </location>
</feature>
<feature type="topological domain" description="Extracellular" evidence="8">
    <location>
        <begin position="1" status="less than"/>
        <end position="57" status="greater than"/>
    </location>
</feature>
<feature type="glycosylation site" description="N-linked (GlcNAc...) asparagine" evidence="4">
    <location>
        <position position="12"/>
    </location>
</feature>
<feature type="non-consecutive residues" evidence="8">
    <location>
        <begin position="8"/>
        <end position="9"/>
    </location>
</feature>
<feature type="non-consecutive residues" evidence="8">
    <location>
        <begin position="24"/>
        <end position="25"/>
    </location>
</feature>
<feature type="non-consecutive residues" evidence="8">
    <location>
        <begin position="37"/>
        <end position="38"/>
    </location>
</feature>
<feature type="non-consecutive residues" evidence="8">
    <location>
        <begin position="44"/>
        <end position="45"/>
    </location>
</feature>
<feature type="non-terminal residue" evidence="8">
    <location>
        <position position="1"/>
    </location>
</feature>
<feature type="non-terminal residue" evidence="8">
    <location>
        <position position="57"/>
    </location>
</feature>
<proteinExistence type="evidence at protein level"/>
<name>AMPE_GLOBL</name>
<protein>
    <recommendedName>
        <fullName evidence="6">Aminopeptidase A</fullName>
        <shortName evidence="7">AP-A</shortName>
        <shortName evidence="6">APA</shortName>
        <ecNumber evidence="5">3.4.11.7</ecNumber>
    </recommendedName>
    <alternativeName>
        <fullName evidence="7">Glutamyl aminopeptidase</fullName>
        <shortName evidence="7">EAP</shortName>
    </alternativeName>
</protein>
<comment type="function">
    <text evidence="2 5">Venom protein that cleaves N-terminal acidic residues from peptides with high potency in presence of calcium (PubMed:18384831). It may have several roles in venom including alteration of blood pressure by cleaving circulating angiotensin-2, general degradation of host tissue, increase of permeability to other venom components, and/or processing of other toxins in the venom (By similarity) (PubMed:18384831).</text>
</comment>
<comment type="catalytic activity">
    <reaction evidence="5">
        <text>Release of N-terminal glutamate (and to a lesser extent aspartate) from a peptide.</text>
        <dbReference type="EC" id="3.4.11.7"/>
    </reaction>
</comment>
<comment type="cofactor">
    <cofactor evidence="3">
        <name>Zn(2+)</name>
        <dbReference type="ChEBI" id="CHEBI:29105"/>
    </cofactor>
    <text evidence="3">Binds 1 zinc ion per subunit.</text>
</comment>
<comment type="activity regulation">
    <text evidence="1">Inhibited by the aminopeptidase competitive inhibitors amastatin (Leu and acidic inhibitor), and bestatin (Leu inhibitor), by chelating agents EDTA, and 1,10-Phenanthroline, as well as by Zn(2+) ions. Substrate specificity is modulated by Ca(2+), Ba(2+), and Mn(2+) ions which enhances the enzymatic activity for cleavage of acidic residues.</text>
</comment>
<comment type="subunit">
    <text evidence="3">Homodimer; disulfide-linked.</text>
</comment>
<comment type="subcellular location">
    <subcellularLocation>
        <location evidence="5">Cell membrane</location>
        <topology evidence="8">Single-pass type II membrane protein</topology>
    </subcellularLocation>
    <text evidence="8">Found in the venom as transmembrane proteins in exosome-like vesicles.</text>
</comment>
<comment type="similarity">
    <text evidence="7">Belongs to the peptidase M1 family.</text>
</comment>
<keyword id="KW-0031">Aminopeptidase</keyword>
<keyword id="KW-0106">Calcium</keyword>
<keyword id="KW-1003">Cell membrane</keyword>
<keyword id="KW-0903">Direct protein sequencing</keyword>
<keyword id="KW-1015">Disulfide bond</keyword>
<keyword id="KW-0325">Glycoprotein</keyword>
<keyword id="KW-0378">Hydrolase</keyword>
<keyword id="KW-0472">Membrane</keyword>
<keyword id="KW-0479">Metal-binding</keyword>
<keyword id="KW-0482">Metalloprotease</keyword>
<keyword id="KW-0645">Protease</keyword>
<keyword id="KW-0735">Signal-anchor</keyword>
<keyword id="KW-0812">Transmembrane</keyword>
<keyword id="KW-1133">Transmembrane helix</keyword>
<keyword id="KW-0862">Zinc</keyword>
<sequence length="57" mass="6707">YLTDHYFKVDLNSTVTQQRFLLDPSELAGITIMQPSDSNIEWLKQYRDDVATWLENS</sequence>
<accession>P0DQU2</accession>
<dbReference type="EC" id="3.4.11.7" evidence="5"/>
<dbReference type="GO" id="GO:0005886">
    <property type="term" value="C:plasma membrane"/>
    <property type="evidence" value="ECO:0007669"/>
    <property type="project" value="UniProtKB-SubCell"/>
</dbReference>
<dbReference type="GO" id="GO:0004177">
    <property type="term" value="F:aminopeptidase activity"/>
    <property type="evidence" value="ECO:0007669"/>
    <property type="project" value="UniProtKB-KW"/>
</dbReference>
<dbReference type="GO" id="GO:0046872">
    <property type="term" value="F:metal ion binding"/>
    <property type="evidence" value="ECO:0007669"/>
    <property type="project" value="UniProtKB-KW"/>
</dbReference>
<dbReference type="GO" id="GO:0008237">
    <property type="term" value="F:metallopeptidase activity"/>
    <property type="evidence" value="ECO:0007669"/>
    <property type="project" value="UniProtKB-KW"/>
</dbReference>
<dbReference type="GO" id="GO:0006508">
    <property type="term" value="P:proteolysis"/>
    <property type="evidence" value="ECO:0007669"/>
    <property type="project" value="UniProtKB-KW"/>
</dbReference>
<organism>
    <name type="scientific">Gloydius blomhoffii</name>
    <name type="common">Mamushi</name>
    <name type="synonym">Agkistrodon halys blomhoffi</name>
    <dbReference type="NCBI Taxonomy" id="242054"/>
    <lineage>
        <taxon>Eukaryota</taxon>
        <taxon>Metazoa</taxon>
        <taxon>Chordata</taxon>
        <taxon>Craniata</taxon>
        <taxon>Vertebrata</taxon>
        <taxon>Euteleostomi</taxon>
        <taxon>Lepidosauria</taxon>
        <taxon>Squamata</taxon>
        <taxon>Bifurcata</taxon>
        <taxon>Unidentata</taxon>
        <taxon>Episquamata</taxon>
        <taxon>Toxicofera</taxon>
        <taxon>Serpentes</taxon>
        <taxon>Colubroidea</taxon>
        <taxon>Viperidae</taxon>
        <taxon>Crotalinae</taxon>
        <taxon>Gloydius</taxon>
    </lineage>
</organism>
<reference key="1">
    <citation type="journal article" date="2008" name="Toxicon">
        <title>Exosome-like vesicles in Gloydius blomhoffii blomhoffii venom.</title>
        <authorList>
            <person name="Ogawa Y."/>
            <person name="Kanai-Azuma M."/>
            <person name="Akimoto Y."/>
            <person name="Kawakami H."/>
            <person name="Yanoshita R."/>
        </authorList>
    </citation>
    <scope>PROTEIN SEQUENCE</scope>
    <scope>FUNCTION</scope>
    <scope>CATALYTIC ACTIVITY</scope>
    <scope>SUBCELLULAR LOCATION</scope>
    <source>
        <tissue>Venom</tissue>
    </source>
</reference>